<gene>
    <name evidence="1" type="primary">glyA2</name>
    <name type="ordered locus">Rru_A1827</name>
</gene>
<proteinExistence type="inferred from homology"/>
<feature type="chain" id="PRO_0000235016" description="Serine hydroxymethyltransferase 2">
    <location>
        <begin position="1"/>
        <end position="430"/>
    </location>
</feature>
<feature type="binding site" evidence="1">
    <location>
        <position position="128"/>
    </location>
    <ligand>
        <name>(6S)-5,6,7,8-tetrahydrofolate</name>
        <dbReference type="ChEBI" id="CHEBI:57453"/>
    </ligand>
</feature>
<feature type="binding site" evidence="1">
    <location>
        <begin position="132"/>
        <end position="134"/>
    </location>
    <ligand>
        <name>(6S)-5,6,7,8-tetrahydrofolate</name>
        <dbReference type="ChEBI" id="CHEBI:57453"/>
    </ligand>
</feature>
<feature type="site" description="Plays an important role in substrate specificity" evidence="1">
    <location>
        <position position="236"/>
    </location>
</feature>
<feature type="modified residue" description="N6-(pyridoxal phosphate)lysine" evidence="1">
    <location>
        <position position="237"/>
    </location>
</feature>
<keyword id="KW-0028">Amino-acid biosynthesis</keyword>
<keyword id="KW-0963">Cytoplasm</keyword>
<keyword id="KW-0554">One-carbon metabolism</keyword>
<keyword id="KW-0663">Pyridoxal phosphate</keyword>
<keyword id="KW-1185">Reference proteome</keyword>
<keyword id="KW-0808">Transferase</keyword>
<accession>Q2RTB8</accession>
<organism>
    <name type="scientific">Rhodospirillum rubrum (strain ATCC 11170 / ATH 1.1.1 / DSM 467 / LMG 4362 / NCIMB 8255 / S1)</name>
    <dbReference type="NCBI Taxonomy" id="269796"/>
    <lineage>
        <taxon>Bacteria</taxon>
        <taxon>Pseudomonadati</taxon>
        <taxon>Pseudomonadota</taxon>
        <taxon>Alphaproteobacteria</taxon>
        <taxon>Rhodospirillales</taxon>
        <taxon>Rhodospirillaceae</taxon>
        <taxon>Rhodospirillum</taxon>
    </lineage>
</organism>
<protein>
    <recommendedName>
        <fullName evidence="1">Serine hydroxymethyltransferase 2</fullName>
        <shortName evidence="1">SHMT 2</shortName>
        <shortName evidence="1">Serine methylase 2</shortName>
        <ecNumber evidence="1">2.1.2.1</ecNumber>
    </recommendedName>
</protein>
<sequence>MTAYTPWTGFFSASVAQADPELDRVLRAELSRQQDQIELIASENIVSRAVLEAAGSVLTNKYAEGYPGKRYYGGCEEVDVAEELAIERAKALFGCSYVNVQPHSGAQANGAVMMALVKPGDTIMGMSLAAGGHLTHGAPPAQSGKWFNAVQYGVRLQDASIDFDEVATLAETHKPKLIIAGGSAYPRIIDFAKFREIADRVGALFMVDMAHFAGLVAAGLHPSPLPYADIVTTTTHKTLRGPRGGMVLSNNPDIGKKINSAVFPGLQGGPLMHIIAAKAVAFGEALRPEFKVYAQAVIDNAKALTDALAAGGLNIVSGGTDTHLALVDLRPKALTGNIVEKSLERANITTNKNGIPFDPEKPAITSGIRVGTPAGTTRGFGTAEFTEIGKLIVEVLDGLAANGEDNSQAEAAVREKVAVLCRRFPIYGGL</sequence>
<reference key="1">
    <citation type="journal article" date="2011" name="Stand. Genomic Sci.">
        <title>Complete genome sequence of Rhodospirillum rubrum type strain (S1).</title>
        <authorList>
            <person name="Munk A.C."/>
            <person name="Copeland A."/>
            <person name="Lucas S."/>
            <person name="Lapidus A."/>
            <person name="Del Rio T.G."/>
            <person name="Barry K."/>
            <person name="Detter J.C."/>
            <person name="Hammon N."/>
            <person name="Israni S."/>
            <person name="Pitluck S."/>
            <person name="Brettin T."/>
            <person name="Bruce D."/>
            <person name="Han C."/>
            <person name="Tapia R."/>
            <person name="Gilna P."/>
            <person name="Schmutz J."/>
            <person name="Larimer F."/>
            <person name="Land M."/>
            <person name="Kyrpides N.C."/>
            <person name="Mavromatis K."/>
            <person name="Richardson P."/>
            <person name="Rohde M."/>
            <person name="Goeker M."/>
            <person name="Klenk H.P."/>
            <person name="Zhang Y."/>
            <person name="Roberts G.P."/>
            <person name="Reslewic S."/>
            <person name="Schwartz D.C."/>
        </authorList>
    </citation>
    <scope>NUCLEOTIDE SEQUENCE [LARGE SCALE GENOMIC DNA]</scope>
    <source>
        <strain>ATCC 11170 / ATH 1.1.1 / DSM 467 / LMG 4362 / NCIMB 8255 / S1</strain>
    </source>
</reference>
<name>GLYA2_RHORT</name>
<comment type="function">
    <text evidence="1">Catalyzes the reversible interconversion of serine and glycine with tetrahydrofolate (THF) serving as the one-carbon carrier. This reaction serves as the major source of one-carbon groups required for the biosynthesis of purines, thymidylate, methionine, and other important biomolecules. Also exhibits THF-independent aldolase activity toward beta-hydroxyamino acids, producing glycine and aldehydes, via a retro-aldol mechanism.</text>
</comment>
<comment type="catalytic activity">
    <reaction evidence="1">
        <text>(6R)-5,10-methylene-5,6,7,8-tetrahydrofolate + glycine + H2O = (6S)-5,6,7,8-tetrahydrofolate + L-serine</text>
        <dbReference type="Rhea" id="RHEA:15481"/>
        <dbReference type="ChEBI" id="CHEBI:15377"/>
        <dbReference type="ChEBI" id="CHEBI:15636"/>
        <dbReference type="ChEBI" id="CHEBI:33384"/>
        <dbReference type="ChEBI" id="CHEBI:57305"/>
        <dbReference type="ChEBI" id="CHEBI:57453"/>
        <dbReference type="EC" id="2.1.2.1"/>
    </reaction>
</comment>
<comment type="cofactor">
    <cofactor evidence="1">
        <name>pyridoxal 5'-phosphate</name>
        <dbReference type="ChEBI" id="CHEBI:597326"/>
    </cofactor>
</comment>
<comment type="pathway">
    <text evidence="1">One-carbon metabolism; tetrahydrofolate interconversion.</text>
</comment>
<comment type="pathway">
    <text evidence="1">Amino-acid biosynthesis; glycine biosynthesis; glycine from L-serine: step 1/1.</text>
</comment>
<comment type="subunit">
    <text evidence="1">Homodimer.</text>
</comment>
<comment type="subcellular location">
    <subcellularLocation>
        <location evidence="1">Cytoplasm</location>
    </subcellularLocation>
</comment>
<comment type="similarity">
    <text evidence="1">Belongs to the SHMT family.</text>
</comment>
<evidence type="ECO:0000255" key="1">
    <source>
        <dbReference type="HAMAP-Rule" id="MF_00051"/>
    </source>
</evidence>
<dbReference type="EC" id="2.1.2.1" evidence="1"/>
<dbReference type="EMBL" id="CP000230">
    <property type="protein sequence ID" value="ABC22627.1"/>
    <property type="molecule type" value="Genomic_DNA"/>
</dbReference>
<dbReference type="RefSeq" id="YP_426914.1">
    <property type="nucleotide sequence ID" value="NC_007643.1"/>
</dbReference>
<dbReference type="SMR" id="Q2RTB8"/>
<dbReference type="STRING" id="269796.Rru_A1827"/>
<dbReference type="EnsemblBacteria" id="ABC22627">
    <property type="protein sequence ID" value="ABC22627"/>
    <property type="gene ID" value="Rru_A1827"/>
</dbReference>
<dbReference type="KEGG" id="rru:Rru_A1827"/>
<dbReference type="PATRIC" id="fig|269796.9.peg.1905"/>
<dbReference type="eggNOG" id="COG0112">
    <property type="taxonomic scope" value="Bacteria"/>
</dbReference>
<dbReference type="HOGENOM" id="CLU_022477_2_1_5"/>
<dbReference type="PhylomeDB" id="Q2RTB8"/>
<dbReference type="UniPathway" id="UPA00193"/>
<dbReference type="UniPathway" id="UPA00288">
    <property type="reaction ID" value="UER01023"/>
</dbReference>
<dbReference type="Proteomes" id="UP000001929">
    <property type="component" value="Chromosome"/>
</dbReference>
<dbReference type="GO" id="GO:0005829">
    <property type="term" value="C:cytosol"/>
    <property type="evidence" value="ECO:0007669"/>
    <property type="project" value="TreeGrafter"/>
</dbReference>
<dbReference type="GO" id="GO:0004372">
    <property type="term" value="F:glycine hydroxymethyltransferase activity"/>
    <property type="evidence" value="ECO:0007669"/>
    <property type="project" value="UniProtKB-UniRule"/>
</dbReference>
<dbReference type="GO" id="GO:0030170">
    <property type="term" value="F:pyridoxal phosphate binding"/>
    <property type="evidence" value="ECO:0007669"/>
    <property type="project" value="UniProtKB-UniRule"/>
</dbReference>
<dbReference type="GO" id="GO:0019264">
    <property type="term" value="P:glycine biosynthetic process from serine"/>
    <property type="evidence" value="ECO:0007669"/>
    <property type="project" value="UniProtKB-UniRule"/>
</dbReference>
<dbReference type="GO" id="GO:0035999">
    <property type="term" value="P:tetrahydrofolate interconversion"/>
    <property type="evidence" value="ECO:0007669"/>
    <property type="project" value="UniProtKB-UniRule"/>
</dbReference>
<dbReference type="CDD" id="cd00378">
    <property type="entry name" value="SHMT"/>
    <property type="match status" value="1"/>
</dbReference>
<dbReference type="FunFam" id="3.40.640.10:FF:000001">
    <property type="entry name" value="Serine hydroxymethyltransferase"/>
    <property type="match status" value="1"/>
</dbReference>
<dbReference type="Gene3D" id="3.90.1150.10">
    <property type="entry name" value="Aspartate Aminotransferase, domain 1"/>
    <property type="match status" value="1"/>
</dbReference>
<dbReference type="Gene3D" id="3.40.640.10">
    <property type="entry name" value="Type I PLP-dependent aspartate aminotransferase-like (Major domain)"/>
    <property type="match status" value="1"/>
</dbReference>
<dbReference type="HAMAP" id="MF_00051">
    <property type="entry name" value="SHMT"/>
    <property type="match status" value="1"/>
</dbReference>
<dbReference type="InterPro" id="IPR015424">
    <property type="entry name" value="PyrdxlP-dep_Trfase"/>
</dbReference>
<dbReference type="InterPro" id="IPR015421">
    <property type="entry name" value="PyrdxlP-dep_Trfase_major"/>
</dbReference>
<dbReference type="InterPro" id="IPR015422">
    <property type="entry name" value="PyrdxlP-dep_Trfase_small"/>
</dbReference>
<dbReference type="InterPro" id="IPR001085">
    <property type="entry name" value="Ser_HO-MeTrfase"/>
</dbReference>
<dbReference type="InterPro" id="IPR049943">
    <property type="entry name" value="Ser_HO-MeTrfase-like"/>
</dbReference>
<dbReference type="InterPro" id="IPR019798">
    <property type="entry name" value="Ser_HO-MeTrfase_PLP_BS"/>
</dbReference>
<dbReference type="InterPro" id="IPR039429">
    <property type="entry name" value="SHMT-like_dom"/>
</dbReference>
<dbReference type="NCBIfam" id="NF000586">
    <property type="entry name" value="PRK00011.1"/>
    <property type="match status" value="1"/>
</dbReference>
<dbReference type="PANTHER" id="PTHR11680">
    <property type="entry name" value="SERINE HYDROXYMETHYLTRANSFERASE"/>
    <property type="match status" value="1"/>
</dbReference>
<dbReference type="PANTHER" id="PTHR11680:SF35">
    <property type="entry name" value="SERINE HYDROXYMETHYLTRANSFERASE 1"/>
    <property type="match status" value="1"/>
</dbReference>
<dbReference type="Pfam" id="PF00464">
    <property type="entry name" value="SHMT"/>
    <property type="match status" value="1"/>
</dbReference>
<dbReference type="PIRSF" id="PIRSF000412">
    <property type="entry name" value="SHMT"/>
    <property type="match status" value="1"/>
</dbReference>
<dbReference type="SUPFAM" id="SSF53383">
    <property type="entry name" value="PLP-dependent transferases"/>
    <property type="match status" value="1"/>
</dbReference>
<dbReference type="PROSITE" id="PS00096">
    <property type="entry name" value="SHMT"/>
    <property type="match status" value="1"/>
</dbReference>